<proteinExistence type="inferred from homology"/>
<dbReference type="EMBL" id="CP000114">
    <property type="protein sequence ID" value="ABA45454.1"/>
    <property type="molecule type" value="Genomic_DNA"/>
</dbReference>
<dbReference type="RefSeq" id="WP_000507056.1">
    <property type="nucleotide sequence ID" value="NC_007432.1"/>
</dbReference>
<dbReference type="SMR" id="Q3JYN3"/>
<dbReference type="KEGG" id="sak:SAK_2030"/>
<dbReference type="HOGENOM" id="CLU_162466_0_0_9"/>
<dbReference type="HAMAP" id="MF_01507">
    <property type="entry name" value="UPF0297"/>
    <property type="match status" value="1"/>
</dbReference>
<dbReference type="InterPro" id="IPR009309">
    <property type="entry name" value="IreB"/>
</dbReference>
<dbReference type="NCBIfam" id="NF003997">
    <property type="entry name" value="PRK05473.1"/>
    <property type="match status" value="1"/>
</dbReference>
<dbReference type="PANTHER" id="PTHR40067">
    <property type="entry name" value="UPF0297 PROTEIN YRZL"/>
    <property type="match status" value="1"/>
</dbReference>
<dbReference type="PANTHER" id="PTHR40067:SF1">
    <property type="entry name" value="UPF0297 PROTEIN YRZL"/>
    <property type="match status" value="1"/>
</dbReference>
<dbReference type="Pfam" id="PF06135">
    <property type="entry name" value="IreB"/>
    <property type="match status" value="1"/>
</dbReference>
<dbReference type="PIRSF" id="PIRSF037258">
    <property type="entry name" value="DUF965_bac"/>
    <property type="match status" value="1"/>
</dbReference>
<protein>
    <recommendedName>
        <fullName evidence="1">UPF0297 protein SAK_2030</fullName>
    </recommendedName>
</protein>
<comment type="similarity">
    <text evidence="1">Belongs to the UPF0297 family.</text>
</comment>
<organism>
    <name type="scientific">Streptococcus agalactiae serotype Ia (strain ATCC 27591 / A909 / CDC SS700)</name>
    <dbReference type="NCBI Taxonomy" id="205921"/>
    <lineage>
        <taxon>Bacteria</taxon>
        <taxon>Bacillati</taxon>
        <taxon>Bacillota</taxon>
        <taxon>Bacilli</taxon>
        <taxon>Lactobacillales</taxon>
        <taxon>Streptococcaceae</taxon>
        <taxon>Streptococcus</taxon>
    </lineage>
</organism>
<evidence type="ECO:0000255" key="1">
    <source>
        <dbReference type="HAMAP-Rule" id="MF_01507"/>
    </source>
</evidence>
<gene>
    <name type="ordered locus">SAK_2030</name>
</gene>
<reference key="1">
    <citation type="journal article" date="2005" name="Proc. Natl. Acad. Sci. U.S.A.">
        <title>Genome analysis of multiple pathogenic isolates of Streptococcus agalactiae: implications for the microbial 'pan-genome'.</title>
        <authorList>
            <person name="Tettelin H."/>
            <person name="Masignani V."/>
            <person name="Cieslewicz M.J."/>
            <person name="Donati C."/>
            <person name="Medini D."/>
            <person name="Ward N.L."/>
            <person name="Angiuoli S.V."/>
            <person name="Crabtree J."/>
            <person name="Jones A.L."/>
            <person name="Durkin A.S."/>
            <person name="DeBoy R.T."/>
            <person name="Davidsen T.M."/>
            <person name="Mora M."/>
            <person name="Scarselli M."/>
            <person name="Margarit y Ros I."/>
            <person name="Peterson J.D."/>
            <person name="Hauser C.R."/>
            <person name="Sundaram J.P."/>
            <person name="Nelson W.C."/>
            <person name="Madupu R."/>
            <person name="Brinkac L.M."/>
            <person name="Dodson R.J."/>
            <person name="Rosovitz M.J."/>
            <person name="Sullivan S.A."/>
            <person name="Daugherty S.C."/>
            <person name="Haft D.H."/>
            <person name="Selengut J."/>
            <person name="Gwinn M.L."/>
            <person name="Zhou L."/>
            <person name="Zafar N."/>
            <person name="Khouri H."/>
            <person name="Radune D."/>
            <person name="Dimitrov G."/>
            <person name="Watkins K."/>
            <person name="O'Connor K.J."/>
            <person name="Smith S."/>
            <person name="Utterback T.R."/>
            <person name="White O."/>
            <person name="Rubens C.E."/>
            <person name="Grandi G."/>
            <person name="Madoff L.C."/>
            <person name="Kasper D.L."/>
            <person name="Telford J.L."/>
            <person name="Wessels M.R."/>
            <person name="Rappuoli R."/>
            <person name="Fraser C.M."/>
        </authorList>
    </citation>
    <scope>NUCLEOTIDE SEQUENCE [LARGE SCALE GENOMIC DNA]</scope>
    <source>
        <strain>ATCC 27591 / A909 / CDC SS700</strain>
    </source>
</reference>
<accession>Q3JYN3</accession>
<name>Y2030_STRA1</name>
<sequence length="88" mass="10283">MGFTDETVRFRLDDSNKVEISETLTAVYRSLEEKGYNPINQIVGYVLSGDPAYVPRYNDARNQIRKYERDEIVEELVRYYLQGNGIDL</sequence>
<feature type="chain" id="PRO_0000236645" description="UPF0297 protein SAK_2030">
    <location>
        <begin position="1"/>
        <end position="88"/>
    </location>
</feature>